<evidence type="ECO:0000255" key="1">
    <source>
        <dbReference type="HAMAP-Rule" id="MF_00685"/>
    </source>
</evidence>
<evidence type="ECO:0000256" key="2">
    <source>
        <dbReference type="SAM" id="MobiDB-lite"/>
    </source>
</evidence>
<proteinExistence type="inferred from homology"/>
<dbReference type="EC" id="2.4.1.18" evidence="1"/>
<dbReference type="EMBL" id="CP000518">
    <property type="protein sequence ID" value="ABL93127.1"/>
    <property type="molecule type" value="Genomic_DNA"/>
</dbReference>
<dbReference type="SMR" id="A1UJW9"/>
<dbReference type="STRING" id="189918.Mkms_3935"/>
<dbReference type="CAZy" id="CBM48">
    <property type="family name" value="Carbohydrate-Binding Module Family 48"/>
</dbReference>
<dbReference type="CAZy" id="GH13">
    <property type="family name" value="Glycoside Hydrolase Family 13"/>
</dbReference>
<dbReference type="KEGG" id="mkm:Mkms_3935"/>
<dbReference type="HOGENOM" id="CLU_004245_3_2_11"/>
<dbReference type="OrthoDB" id="9800174at2"/>
<dbReference type="UniPathway" id="UPA00164"/>
<dbReference type="GO" id="GO:0005829">
    <property type="term" value="C:cytosol"/>
    <property type="evidence" value="ECO:0007669"/>
    <property type="project" value="TreeGrafter"/>
</dbReference>
<dbReference type="GO" id="GO:0003844">
    <property type="term" value="F:1,4-alpha-glucan branching enzyme activity"/>
    <property type="evidence" value="ECO:0007669"/>
    <property type="project" value="UniProtKB-UniRule"/>
</dbReference>
<dbReference type="GO" id="GO:0043169">
    <property type="term" value="F:cation binding"/>
    <property type="evidence" value="ECO:0007669"/>
    <property type="project" value="InterPro"/>
</dbReference>
<dbReference type="GO" id="GO:0004553">
    <property type="term" value="F:hydrolase activity, hydrolyzing O-glycosyl compounds"/>
    <property type="evidence" value="ECO:0007669"/>
    <property type="project" value="InterPro"/>
</dbReference>
<dbReference type="GO" id="GO:0005978">
    <property type="term" value="P:glycogen biosynthetic process"/>
    <property type="evidence" value="ECO:0007669"/>
    <property type="project" value="UniProtKB-UniRule"/>
</dbReference>
<dbReference type="CDD" id="cd11322">
    <property type="entry name" value="AmyAc_Glg_BE"/>
    <property type="match status" value="1"/>
</dbReference>
<dbReference type="CDD" id="cd02855">
    <property type="entry name" value="E_set_GBE_prok_N"/>
    <property type="match status" value="1"/>
</dbReference>
<dbReference type="FunFam" id="2.60.40.10:FF:000169">
    <property type="entry name" value="1,4-alpha-glucan branching enzyme GlgB"/>
    <property type="match status" value="1"/>
</dbReference>
<dbReference type="FunFam" id="2.60.40.1180:FF:000002">
    <property type="entry name" value="1,4-alpha-glucan branching enzyme GlgB"/>
    <property type="match status" value="1"/>
</dbReference>
<dbReference type="FunFam" id="3.20.20.80:FF:000003">
    <property type="entry name" value="1,4-alpha-glucan branching enzyme GlgB"/>
    <property type="match status" value="1"/>
</dbReference>
<dbReference type="Gene3D" id="3.20.20.80">
    <property type="entry name" value="Glycosidases"/>
    <property type="match status" value="1"/>
</dbReference>
<dbReference type="Gene3D" id="2.60.40.1180">
    <property type="entry name" value="Golgi alpha-mannosidase II"/>
    <property type="match status" value="1"/>
</dbReference>
<dbReference type="Gene3D" id="2.60.40.10">
    <property type="entry name" value="Immunoglobulins"/>
    <property type="match status" value="2"/>
</dbReference>
<dbReference type="HAMAP" id="MF_00685">
    <property type="entry name" value="GlgB"/>
    <property type="match status" value="1"/>
</dbReference>
<dbReference type="InterPro" id="IPR006048">
    <property type="entry name" value="A-amylase/branching_C"/>
</dbReference>
<dbReference type="InterPro" id="IPR037439">
    <property type="entry name" value="Branching_enzy"/>
</dbReference>
<dbReference type="InterPro" id="IPR006407">
    <property type="entry name" value="GlgB"/>
</dbReference>
<dbReference type="InterPro" id="IPR054169">
    <property type="entry name" value="GlgB_N"/>
</dbReference>
<dbReference type="InterPro" id="IPR044143">
    <property type="entry name" value="GlgB_N_E_set_prok"/>
</dbReference>
<dbReference type="InterPro" id="IPR006047">
    <property type="entry name" value="Glyco_hydro_13_cat_dom"/>
</dbReference>
<dbReference type="InterPro" id="IPR004193">
    <property type="entry name" value="Glyco_hydro_13_N"/>
</dbReference>
<dbReference type="InterPro" id="IPR013780">
    <property type="entry name" value="Glyco_hydro_b"/>
</dbReference>
<dbReference type="InterPro" id="IPR017853">
    <property type="entry name" value="Glycoside_hydrolase_SF"/>
</dbReference>
<dbReference type="InterPro" id="IPR013783">
    <property type="entry name" value="Ig-like_fold"/>
</dbReference>
<dbReference type="InterPro" id="IPR014756">
    <property type="entry name" value="Ig_E-set"/>
</dbReference>
<dbReference type="NCBIfam" id="TIGR01515">
    <property type="entry name" value="branching_enzym"/>
    <property type="match status" value="1"/>
</dbReference>
<dbReference type="NCBIfam" id="NF003811">
    <property type="entry name" value="PRK05402.1"/>
    <property type="match status" value="1"/>
</dbReference>
<dbReference type="NCBIfam" id="NF008967">
    <property type="entry name" value="PRK12313.1"/>
    <property type="match status" value="1"/>
</dbReference>
<dbReference type="PANTHER" id="PTHR43651">
    <property type="entry name" value="1,4-ALPHA-GLUCAN-BRANCHING ENZYME"/>
    <property type="match status" value="1"/>
</dbReference>
<dbReference type="PANTHER" id="PTHR43651:SF3">
    <property type="entry name" value="1,4-ALPHA-GLUCAN-BRANCHING ENZYME"/>
    <property type="match status" value="1"/>
</dbReference>
<dbReference type="Pfam" id="PF00128">
    <property type="entry name" value="Alpha-amylase"/>
    <property type="match status" value="2"/>
</dbReference>
<dbReference type="Pfam" id="PF02806">
    <property type="entry name" value="Alpha-amylase_C"/>
    <property type="match status" value="1"/>
</dbReference>
<dbReference type="Pfam" id="PF02922">
    <property type="entry name" value="CBM_48"/>
    <property type="match status" value="1"/>
</dbReference>
<dbReference type="Pfam" id="PF22019">
    <property type="entry name" value="GlgB_N"/>
    <property type="match status" value="1"/>
</dbReference>
<dbReference type="PIRSF" id="PIRSF000463">
    <property type="entry name" value="GlgB"/>
    <property type="match status" value="1"/>
</dbReference>
<dbReference type="SMART" id="SM00642">
    <property type="entry name" value="Aamy"/>
    <property type="match status" value="1"/>
</dbReference>
<dbReference type="SUPFAM" id="SSF51445">
    <property type="entry name" value="(Trans)glycosidases"/>
    <property type="match status" value="1"/>
</dbReference>
<dbReference type="SUPFAM" id="SSF81296">
    <property type="entry name" value="E set domains"/>
    <property type="match status" value="2"/>
</dbReference>
<dbReference type="SUPFAM" id="SSF51011">
    <property type="entry name" value="Glycosyl hydrolase domain"/>
    <property type="match status" value="1"/>
</dbReference>
<protein>
    <recommendedName>
        <fullName evidence="1">1,4-alpha-glucan branching enzyme GlgB</fullName>
        <ecNumber evidence="1">2.4.1.18</ecNumber>
    </recommendedName>
    <alternativeName>
        <fullName evidence="1">1,4-alpha-D-glucan:1,4-alpha-D-glucan 6-glucosyl-transferase</fullName>
    </alternativeName>
    <alternativeName>
        <fullName evidence="1">Alpha-(1-&gt;4)-glucan branching enzyme</fullName>
    </alternativeName>
    <alternativeName>
        <fullName evidence="1">Glycogen branching enzyme</fullName>
        <shortName evidence="1">BE</shortName>
    </alternativeName>
</protein>
<feature type="chain" id="PRO_1000044984" description="1,4-alpha-glucan branching enzyme GlgB">
    <location>
        <begin position="1"/>
        <end position="759"/>
    </location>
</feature>
<feature type="region of interest" description="Disordered" evidence="2">
    <location>
        <begin position="1"/>
        <end position="22"/>
    </location>
</feature>
<feature type="active site" description="Nucleophile" evidence="1">
    <location>
        <position position="422"/>
    </location>
</feature>
<feature type="active site" description="Proton donor" evidence="1">
    <location>
        <position position="475"/>
    </location>
</feature>
<reference key="1">
    <citation type="submission" date="2006-12" db="EMBL/GenBank/DDBJ databases">
        <title>Complete sequence of chromosome of Mycobacterium sp. KMS.</title>
        <authorList>
            <consortium name="US DOE Joint Genome Institute"/>
            <person name="Copeland A."/>
            <person name="Lucas S."/>
            <person name="Lapidus A."/>
            <person name="Barry K."/>
            <person name="Detter J.C."/>
            <person name="Glavina del Rio T."/>
            <person name="Hammon N."/>
            <person name="Israni S."/>
            <person name="Dalin E."/>
            <person name="Tice H."/>
            <person name="Pitluck S."/>
            <person name="Kiss H."/>
            <person name="Brettin T."/>
            <person name="Bruce D."/>
            <person name="Han C."/>
            <person name="Tapia R."/>
            <person name="Gilna P."/>
            <person name="Schmutz J."/>
            <person name="Larimer F."/>
            <person name="Land M."/>
            <person name="Hauser L."/>
            <person name="Kyrpides N."/>
            <person name="Mikhailova N."/>
            <person name="Miller C.D."/>
            <person name="Richardson P."/>
        </authorList>
    </citation>
    <scope>NUCLEOTIDE SEQUENCE [LARGE SCALE GENOMIC DNA]</scope>
    <source>
        <strain>KMS</strain>
    </source>
</reference>
<gene>
    <name evidence="1" type="primary">glgB</name>
    <name type="ordered locus">Mkms_3935</name>
</gene>
<name>GLGB_MYCSK</name>
<accession>A1UJW9</accession>
<sequence length="759" mass="84965">MAKTKGLPKDTAVTPSPHLRPHTADLNRLLAGEHHDPHSILGAHEYDDHTVIRAYRPHATEVAAVVGGERHVFTHLEAGVFAVTLPFTGLIDYRLEVGYDHGGDQPHIHHTADAYRFLPTLGEMDLHLFSEGRHERLWEVLGAHPRTFETPDGVVEGVSFAVWAPNANGVQLIGDFNHWDGNEAQLRVLGSTGVWELFWPDFPVDGLYKFRIHGADGVVSERADPMAFATEVPPQTASRVTTSSYTWNDDAWMTQRAAQNPVFEPMSTLEVHLMSWRPGLSYVELADQLTEYIVEHGFTHVEMLPVAEHPFGGSWGYQVTSYYAPTSRLGTPDEFRYLVDRLHQAGIGVIVDWVPAHFPKDAWALGRFDGTALYEHADPRRGEQLDWGTYVFDFGRAEVRNFLVANALYWLQEFHVDGLRVDAVASMLYLDYSRPEGGWTPNIYGGRENLEAVQFLQEMNATVHKASPGIVTIAEESTSWPGVTRPTNLGGLGFSMKWNMGWMNDTLAFISRDPIHRSYHHHEMTFSMLYAFSENYVLPISHDEVVHGKGTLWGRMLGDDHRKAAGVRQLLAYQWAHPGKQLLFQGQEFGQRAEWSEERGVDWYQLDENSYSGGILRMISDMNGIYTSHRALWSHDTSPEGYSWIDANDSTNNVLSFLRYGDDGSVLACVFNFSGSEHSQYRLGLPHAGTWREVLNTDAADYNGAGIGNYGAVQATDEPWHGRPASAVMVLPPLSALWFEPVAAEAPVVQEPPTAPPLS</sequence>
<comment type="function">
    <text evidence="1">Catalyzes the formation of the alpha-1,6-glucosidic linkages in glycogen by scission of a 1,4-alpha-linked oligosaccharide from growing alpha-1,4-glucan chains and the subsequent attachment of the oligosaccharide to the alpha-1,6 position.</text>
</comment>
<comment type="catalytic activity">
    <reaction evidence="1">
        <text>Transfers a segment of a (1-&gt;4)-alpha-D-glucan chain to a primary hydroxy group in a similar glucan chain.</text>
        <dbReference type="EC" id="2.4.1.18"/>
    </reaction>
</comment>
<comment type="pathway">
    <text evidence="1">Glycan biosynthesis; glycogen biosynthesis.</text>
</comment>
<comment type="subunit">
    <text evidence="1">Monomer.</text>
</comment>
<comment type="similarity">
    <text evidence="1">Belongs to the glycosyl hydrolase 13 family. GlgB subfamily.</text>
</comment>
<keyword id="KW-0119">Carbohydrate metabolism</keyword>
<keyword id="KW-0320">Glycogen biosynthesis</keyword>
<keyword id="KW-0321">Glycogen metabolism</keyword>
<keyword id="KW-0328">Glycosyltransferase</keyword>
<keyword id="KW-0808">Transferase</keyword>
<organism>
    <name type="scientific">Mycobacterium sp. (strain KMS)</name>
    <dbReference type="NCBI Taxonomy" id="189918"/>
    <lineage>
        <taxon>Bacteria</taxon>
        <taxon>Bacillati</taxon>
        <taxon>Actinomycetota</taxon>
        <taxon>Actinomycetes</taxon>
        <taxon>Mycobacteriales</taxon>
        <taxon>Mycobacteriaceae</taxon>
        <taxon>Mycobacterium</taxon>
    </lineage>
</organism>